<protein>
    <recommendedName>
        <fullName evidence="1">Chaperone protein DnaK</fullName>
    </recommendedName>
    <alternativeName>
        <fullName evidence="1">HSP70</fullName>
    </alternativeName>
    <alternativeName>
        <fullName evidence="1">Heat shock 70 kDa protein</fullName>
    </alternativeName>
    <alternativeName>
        <fullName evidence="1">Heat shock protein 70</fullName>
    </alternativeName>
</protein>
<reference key="1">
    <citation type="journal article" date="2005" name="DNA Res.">
        <title>Complete genome sequence of the facultative anaerobic magnetotactic bacterium Magnetospirillum sp. strain AMB-1.</title>
        <authorList>
            <person name="Matsunaga T."/>
            <person name="Okamura Y."/>
            <person name="Fukuda Y."/>
            <person name="Wahyudi A.T."/>
            <person name="Murase Y."/>
            <person name="Takeyama H."/>
        </authorList>
    </citation>
    <scope>NUCLEOTIDE SEQUENCE [LARGE SCALE GENOMIC DNA]</scope>
    <source>
        <strain>ATCC 700264 / AMB-1</strain>
    </source>
</reference>
<name>DNAK_PARM1</name>
<gene>
    <name evidence="1" type="primary">dnaK</name>
    <name type="ordered locus">amb4440</name>
</gene>
<proteinExistence type="inferred from homology"/>
<feature type="chain" id="PRO_1000059595" description="Chaperone protein DnaK">
    <location>
        <begin position="1"/>
        <end position="642"/>
    </location>
</feature>
<feature type="region of interest" description="Disordered" evidence="2">
    <location>
        <begin position="602"/>
        <end position="642"/>
    </location>
</feature>
<feature type="compositionally biased region" description="Low complexity" evidence="2">
    <location>
        <begin position="603"/>
        <end position="613"/>
    </location>
</feature>
<feature type="modified residue" description="Phosphothreonine; by autocatalysis" evidence="1">
    <location>
        <position position="198"/>
    </location>
</feature>
<organism>
    <name type="scientific">Paramagnetospirillum magneticum (strain ATCC 700264 / AMB-1)</name>
    <name type="common">Magnetospirillum magneticum</name>
    <dbReference type="NCBI Taxonomy" id="342108"/>
    <lineage>
        <taxon>Bacteria</taxon>
        <taxon>Pseudomonadati</taxon>
        <taxon>Pseudomonadota</taxon>
        <taxon>Alphaproteobacteria</taxon>
        <taxon>Rhodospirillales</taxon>
        <taxon>Magnetospirillaceae</taxon>
        <taxon>Paramagnetospirillum</taxon>
    </lineage>
</organism>
<dbReference type="EMBL" id="AP007255">
    <property type="protein sequence ID" value="BAE53244.1"/>
    <property type="molecule type" value="Genomic_DNA"/>
</dbReference>
<dbReference type="RefSeq" id="WP_011386784.1">
    <property type="nucleotide sequence ID" value="NC_007626.1"/>
</dbReference>
<dbReference type="SMR" id="Q2VYT1"/>
<dbReference type="STRING" id="342108.amb4440"/>
<dbReference type="KEGG" id="mag:amb4440"/>
<dbReference type="HOGENOM" id="CLU_005965_2_3_5"/>
<dbReference type="OrthoDB" id="9766019at2"/>
<dbReference type="Proteomes" id="UP000007058">
    <property type="component" value="Chromosome"/>
</dbReference>
<dbReference type="GO" id="GO:0005524">
    <property type="term" value="F:ATP binding"/>
    <property type="evidence" value="ECO:0007669"/>
    <property type="project" value="UniProtKB-UniRule"/>
</dbReference>
<dbReference type="GO" id="GO:0140662">
    <property type="term" value="F:ATP-dependent protein folding chaperone"/>
    <property type="evidence" value="ECO:0007669"/>
    <property type="project" value="InterPro"/>
</dbReference>
<dbReference type="GO" id="GO:0051082">
    <property type="term" value="F:unfolded protein binding"/>
    <property type="evidence" value="ECO:0007669"/>
    <property type="project" value="InterPro"/>
</dbReference>
<dbReference type="CDD" id="cd11733">
    <property type="entry name" value="ASKHA_NBD_HSP70_HSPA9"/>
    <property type="match status" value="1"/>
</dbReference>
<dbReference type="FunFam" id="2.60.34.10:FF:000014">
    <property type="entry name" value="Chaperone protein DnaK HSP70"/>
    <property type="match status" value="1"/>
</dbReference>
<dbReference type="FunFam" id="3.30.420.40:FF:000020">
    <property type="entry name" value="Chaperone protein HscA homolog"/>
    <property type="match status" value="1"/>
</dbReference>
<dbReference type="FunFam" id="3.30.30.30:FF:000003">
    <property type="entry name" value="Heat shock protein 9"/>
    <property type="match status" value="1"/>
</dbReference>
<dbReference type="FunFam" id="1.20.1270.10:FF:000001">
    <property type="entry name" value="Molecular chaperone DnaK"/>
    <property type="match status" value="1"/>
</dbReference>
<dbReference type="FunFam" id="3.30.420.40:FF:000004">
    <property type="entry name" value="Molecular chaperone DnaK"/>
    <property type="match status" value="1"/>
</dbReference>
<dbReference type="FunFam" id="3.90.640.10:FF:000003">
    <property type="entry name" value="Molecular chaperone DnaK"/>
    <property type="match status" value="1"/>
</dbReference>
<dbReference type="Gene3D" id="1.20.1270.10">
    <property type="match status" value="1"/>
</dbReference>
<dbReference type="Gene3D" id="3.30.420.40">
    <property type="match status" value="2"/>
</dbReference>
<dbReference type="Gene3D" id="3.90.640.10">
    <property type="entry name" value="Actin, Chain A, domain 4"/>
    <property type="match status" value="1"/>
</dbReference>
<dbReference type="Gene3D" id="2.60.34.10">
    <property type="entry name" value="Substrate Binding Domain Of DNAk, Chain A, domain 1"/>
    <property type="match status" value="1"/>
</dbReference>
<dbReference type="HAMAP" id="MF_00332">
    <property type="entry name" value="DnaK"/>
    <property type="match status" value="1"/>
</dbReference>
<dbReference type="InterPro" id="IPR043129">
    <property type="entry name" value="ATPase_NBD"/>
</dbReference>
<dbReference type="InterPro" id="IPR012725">
    <property type="entry name" value="Chaperone_DnaK"/>
</dbReference>
<dbReference type="InterPro" id="IPR018181">
    <property type="entry name" value="Heat_shock_70_CS"/>
</dbReference>
<dbReference type="InterPro" id="IPR029048">
    <property type="entry name" value="HSP70_C_sf"/>
</dbReference>
<dbReference type="InterPro" id="IPR029047">
    <property type="entry name" value="HSP70_peptide-bd_sf"/>
</dbReference>
<dbReference type="InterPro" id="IPR013126">
    <property type="entry name" value="Hsp_70_fam"/>
</dbReference>
<dbReference type="NCBIfam" id="NF001413">
    <property type="entry name" value="PRK00290.1"/>
    <property type="match status" value="1"/>
</dbReference>
<dbReference type="NCBIfam" id="NF003520">
    <property type="entry name" value="PRK05183.1"/>
    <property type="match status" value="1"/>
</dbReference>
<dbReference type="NCBIfam" id="TIGR02350">
    <property type="entry name" value="prok_dnaK"/>
    <property type="match status" value="1"/>
</dbReference>
<dbReference type="PANTHER" id="PTHR19375">
    <property type="entry name" value="HEAT SHOCK PROTEIN 70KDA"/>
    <property type="match status" value="1"/>
</dbReference>
<dbReference type="Pfam" id="PF00012">
    <property type="entry name" value="HSP70"/>
    <property type="match status" value="1"/>
</dbReference>
<dbReference type="PRINTS" id="PR00301">
    <property type="entry name" value="HEATSHOCK70"/>
</dbReference>
<dbReference type="SUPFAM" id="SSF53067">
    <property type="entry name" value="Actin-like ATPase domain"/>
    <property type="match status" value="2"/>
</dbReference>
<dbReference type="SUPFAM" id="SSF100934">
    <property type="entry name" value="Heat shock protein 70kD (HSP70), C-terminal subdomain"/>
    <property type="match status" value="1"/>
</dbReference>
<dbReference type="SUPFAM" id="SSF100920">
    <property type="entry name" value="Heat shock protein 70kD (HSP70), peptide-binding domain"/>
    <property type="match status" value="1"/>
</dbReference>
<dbReference type="PROSITE" id="PS00297">
    <property type="entry name" value="HSP70_1"/>
    <property type="match status" value="1"/>
</dbReference>
<dbReference type="PROSITE" id="PS00329">
    <property type="entry name" value="HSP70_2"/>
    <property type="match status" value="1"/>
</dbReference>
<dbReference type="PROSITE" id="PS01036">
    <property type="entry name" value="HSP70_3"/>
    <property type="match status" value="1"/>
</dbReference>
<accession>Q2VYT1</accession>
<keyword id="KW-0067">ATP-binding</keyword>
<keyword id="KW-0143">Chaperone</keyword>
<keyword id="KW-0547">Nucleotide-binding</keyword>
<keyword id="KW-0597">Phosphoprotein</keyword>
<keyword id="KW-0346">Stress response</keyword>
<evidence type="ECO:0000255" key="1">
    <source>
        <dbReference type="HAMAP-Rule" id="MF_00332"/>
    </source>
</evidence>
<evidence type="ECO:0000256" key="2">
    <source>
        <dbReference type="SAM" id="MobiDB-lite"/>
    </source>
</evidence>
<comment type="function">
    <text evidence="1">Acts as a chaperone.</text>
</comment>
<comment type="induction">
    <text evidence="1">By stress conditions e.g. heat shock.</text>
</comment>
<comment type="similarity">
    <text evidence="1">Belongs to the heat shock protein 70 family.</text>
</comment>
<sequence>MSKVIGIDLGTTNSCVAVMEGKNAKVIENAEGMRTTPSMTAFTESGERLVGQPAKRQAVTNPTSTLFAIKRLIGRRFEDPITKKDMNLVPYHIVAGDNGDAWVEARDAKYSPSQVSAFILQKMKETAEGYLGEKVTQAVITVPAYFNDAQRQATKDAGRIAGLEVLRIINEPTAAALAYGLEKKGAGTIAVYDLGGGTFDVSVLEIGDGVFEVKSTNGDTFLGGEDFDARIMDYLADEFKKEQGIDLRKDRLALQRLKEAAEKAKIELSSSMQTEVNLPFITADASGPKHLNIKLTRSKLEALVEDLVARTVEPCKAALKDAGVKASEIDEVILVGGMTRMPKIQEVVKEFFGREPHKGVNPDEVVAIGAAIQGGVLKGEVKDVLLLDVTPLSLGIETLGGVFTRLIDRNTTIPTRKSQVFSTAEDNQTAVTIRVFQGEREMAADNKVLGQFDLVGIPPAPRGVPQVEVTFDIDANGLVNVSAKDKATGKEQQIRIQASGGLSDADIEKMVKEAEAHAAEDKKRKELIEARNHADGLIHTTEKSLKEFGDKAGAELTGAIEKEITALKAVMDGDDVEAIKAKTESLMQASMKLGEAMYKAQEAAGGAEAEAAAGGHGGASGSHDDKVVDADFEEVDGDKKGK</sequence>